<sequence>MQTSPLLTQLMEALRCLPGVGPKSAQRMAFTLLQRDRSGGMRLAQALTRAMSEIGHCADCRTFTEQDVCNICTNPRRQENGQICVVESPADIYAIEQTGQFSGRYFVLMGHLSPLDGIGPDDIGLDRLEQRLESETLTEVILATNPTVEGEATANYIGELCAQYGVSASRIAHGVPVGGELEMVDGTTLSHSLAGRHKLIF</sequence>
<feature type="chain" id="PRO_1000057154" description="Recombination protein RecR">
    <location>
        <begin position="1"/>
        <end position="201"/>
    </location>
</feature>
<feature type="domain" description="Toprim" evidence="1">
    <location>
        <begin position="81"/>
        <end position="176"/>
    </location>
</feature>
<feature type="zinc finger region" description="C4-type" evidence="1">
    <location>
        <begin position="57"/>
        <end position="72"/>
    </location>
</feature>
<gene>
    <name evidence="1" type="primary">recR</name>
    <name type="ordered locus">Ent638_0952</name>
</gene>
<dbReference type="EMBL" id="CP000653">
    <property type="protein sequence ID" value="ABP59636.1"/>
    <property type="molecule type" value="Genomic_DNA"/>
</dbReference>
<dbReference type="RefSeq" id="WP_012016356.1">
    <property type="nucleotide sequence ID" value="NC_009436.1"/>
</dbReference>
<dbReference type="SMR" id="A4W7F6"/>
<dbReference type="STRING" id="399742.Ent638_0952"/>
<dbReference type="KEGG" id="ent:Ent638_0952"/>
<dbReference type="eggNOG" id="COG0353">
    <property type="taxonomic scope" value="Bacteria"/>
</dbReference>
<dbReference type="HOGENOM" id="CLU_060739_1_2_6"/>
<dbReference type="OrthoDB" id="9802672at2"/>
<dbReference type="Proteomes" id="UP000000230">
    <property type="component" value="Chromosome"/>
</dbReference>
<dbReference type="GO" id="GO:0003677">
    <property type="term" value="F:DNA binding"/>
    <property type="evidence" value="ECO:0007669"/>
    <property type="project" value="UniProtKB-UniRule"/>
</dbReference>
<dbReference type="GO" id="GO:0008270">
    <property type="term" value="F:zinc ion binding"/>
    <property type="evidence" value="ECO:0007669"/>
    <property type="project" value="UniProtKB-KW"/>
</dbReference>
<dbReference type="GO" id="GO:0006310">
    <property type="term" value="P:DNA recombination"/>
    <property type="evidence" value="ECO:0007669"/>
    <property type="project" value="UniProtKB-UniRule"/>
</dbReference>
<dbReference type="GO" id="GO:0006281">
    <property type="term" value="P:DNA repair"/>
    <property type="evidence" value="ECO:0007669"/>
    <property type="project" value="UniProtKB-UniRule"/>
</dbReference>
<dbReference type="CDD" id="cd01025">
    <property type="entry name" value="TOPRIM_recR"/>
    <property type="match status" value="1"/>
</dbReference>
<dbReference type="FunFam" id="1.10.8.420:FF:000001">
    <property type="entry name" value="Recombination protein RecR"/>
    <property type="match status" value="1"/>
</dbReference>
<dbReference type="FunFam" id="3.40.1360.10:FF:000001">
    <property type="entry name" value="Recombination protein RecR"/>
    <property type="match status" value="1"/>
</dbReference>
<dbReference type="Gene3D" id="3.40.1360.10">
    <property type="match status" value="1"/>
</dbReference>
<dbReference type="Gene3D" id="6.10.250.240">
    <property type="match status" value="1"/>
</dbReference>
<dbReference type="Gene3D" id="1.10.8.420">
    <property type="entry name" value="RecR Domain 1"/>
    <property type="match status" value="1"/>
</dbReference>
<dbReference type="HAMAP" id="MF_00017">
    <property type="entry name" value="RecR"/>
    <property type="match status" value="1"/>
</dbReference>
<dbReference type="InterPro" id="IPR000093">
    <property type="entry name" value="DNA_Rcmb_RecR"/>
</dbReference>
<dbReference type="InterPro" id="IPR023627">
    <property type="entry name" value="Rcmb_RecR"/>
</dbReference>
<dbReference type="InterPro" id="IPR015967">
    <property type="entry name" value="Rcmb_RecR_Znf"/>
</dbReference>
<dbReference type="InterPro" id="IPR006171">
    <property type="entry name" value="TOPRIM_dom"/>
</dbReference>
<dbReference type="InterPro" id="IPR034137">
    <property type="entry name" value="TOPRIM_RecR"/>
</dbReference>
<dbReference type="NCBIfam" id="TIGR00615">
    <property type="entry name" value="recR"/>
    <property type="match status" value="1"/>
</dbReference>
<dbReference type="PANTHER" id="PTHR30446">
    <property type="entry name" value="RECOMBINATION PROTEIN RECR"/>
    <property type="match status" value="1"/>
</dbReference>
<dbReference type="PANTHER" id="PTHR30446:SF0">
    <property type="entry name" value="RECOMBINATION PROTEIN RECR"/>
    <property type="match status" value="1"/>
</dbReference>
<dbReference type="Pfam" id="PF21175">
    <property type="entry name" value="RecR_C"/>
    <property type="match status" value="1"/>
</dbReference>
<dbReference type="Pfam" id="PF21176">
    <property type="entry name" value="RecR_HhH"/>
    <property type="match status" value="1"/>
</dbReference>
<dbReference type="Pfam" id="PF02132">
    <property type="entry name" value="RecR_ZnF"/>
    <property type="match status" value="1"/>
</dbReference>
<dbReference type="Pfam" id="PF13662">
    <property type="entry name" value="Toprim_4"/>
    <property type="match status" value="1"/>
</dbReference>
<dbReference type="SMART" id="SM00493">
    <property type="entry name" value="TOPRIM"/>
    <property type="match status" value="1"/>
</dbReference>
<dbReference type="SUPFAM" id="SSF111304">
    <property type="entry name" value="Recombination protein RecR"/>
    <property type="match status" value="1"/>
</dbReference>
<dbReference type="PROSITE" id="PS01300">
    <property type="entry name" value="RECR"/>
    <property type="match status" value="1"/>
</dbReference>
<dbReference type="PROSITE" id="PS50880">
    <property type="entry name" value="TOPRIM"/>
    <property type="match status" value="1"/>
</dbReference>
<reference key="1">
    <citation type="journal article" date="2010" name="PLoS Genet.">
        <title>Genome sequence of the plant growth promoting endophytic bacterium Enterobacter sp. 638.</title>
        <authorList>
            <person name="Taghavi S."/>
            <person name="van der Lelie D."/>
            <person name="Hoffman A."/>
            <person name="Zhang Y.B."/>
            <person name="Walla M.D."/>
            <person name="Vangronsveld J."/>
            <person name="Newman L."/>
            <person name="Monchy S."/>
        </authorList>
    </citation>
    <scope>NUCLEOTIDE SEQUENCE [LARGE SCALE GENOMIC DNA]</scope>
    <source>
        <strain>638</strain>
    </source>
</reference>
<organism>
    <name type="scientific">Enterobacter sp. (strain 638)</name>
    <dbReference type="NCBI Taxonomy" id="399742"/>
    <lineage>
        <taxon>Bacteria</taxon>
        <taxon>Pseudomonadati</taxon>
        <taxon>Pseudomonadota</taxon>
        <taxon>Gammaproteobacteria</taxon>
        <taxon>Enterobacterales</taxon>
        <taxon>Enterobacteriaceae</taxon>
        <taxon>Enterobacter</taxon>
    </lineage>
</organism>
<proteinExistence type="inferred from homology"/>
<evidence type="ECO:0000255" key="1">
    <source>
        <dbReference type="HAMAP-Rule" id="MF_00017"/>
    </source>
</evidence>
<name>RECR_ENT38</name>
<comment type="function">
    <text evidence="1">May play a role in DNA repair. It seems to be involved in an RecBC-independent recombinational process of DNA repair. It may act with RecF and RecO.</text>
</comment>
<comment type="similarity">
    <text evidence="1">Belongs to the RecR family.</text>
</comment>
<keyword id="KW-0227">DNA damage</keyword>
<keyword id="KW-0233">DNA recombination</keyword>
<keyword id="KW-0234">DNA repair</keyword>
<keyword id="KW-0479">Metal-binding</keyword>
<keyword id="KW-0862">Zinc</keyword>
<keyword id="KW-0863">Zinc-finger</keyword>
<accession>A4W7F6</accession>
<protein>
    <recommendedName>
        <fullName evidence="1">Recombination protein RecR</fullName>
    </recommendedName>
</protein>